<dbReference type="EC" id="6.1.1.5" evidence="1"/>
<dbReference type="EMBL" id="CP000282">
    <property type="protein sequence ID" value="ABD81826.1"/>
    <property type="molecule type" value="Genomic_DNA"/>
</dbReference>
<dbReference type="RefSeq" id="WP_011469043.1">
    <property type="nucleotide sequence ID" value="NC_007912.1"/>
</dbReference>
<dbReference type="SMR" id="Q21HK3"/>
<dbReference type="STRING" id="203122.Sde_2566"/>
<dbReference type="GeneID" id="98614229"/>
<dbReference type="KEGG" id="sde:Sde_2566"/>
<dbReference type="eggNOG" id="COG0060">
    <property type="taxonomic scope" value="Bacteria"/>
</dbReference>
<dbReference type="HOGENOM" id="CLU_001493_7_1_6"/>
<dbReference type="OrthoDB" id="9810365at2"/>
<dbReference type="Proteomes" id="UP000001947">
    <property type="component" value="Chromosome"/>
</dbReference>
<dbReference type="GO" id="GO:0005829">
    <property type="term" value="C:cytosol"/>
    <property type="evidence" value="ECO:0007669"/>
    <property type="project" value="TreeGrafter"/>
</dbReference>
<dbReference type="GO" id="GO:0002161">
    <property type="term" value="F:aminoacyl-tRNA deacylase activity"/>
    <property type="evidence" value="ECO:0007669"/>
    <property type="project" value="InterPro"/>
</dbReference>
<dbReference type="GO" id="GO:0005524">
    <property type="term" value="F:ATP binding"/>
    <property type="evidence" value="ECO:0007669"/>
    <property type="project" value="UniProtKB-UniRule"/>
</dbReference>
<dbReference type="GO" id="GO:0004822">
    <property type="term" value="F:isoleucine-tRNA ligase activity"/>
    <property type="evidence" value="ECO:0007669"/>
    <property type="project" value="UniProtKB-UniRule"/>
</dbReference>
<dbReference type="GO" id="GO:0000049">
    <property type="term" value="F:tRNA binding"/>
    <property type="evidence" value="ECO:0007669"/>
    <property type="project" value="InterPro"/>
</dbReference>
<dbReference type="GO" id="GO:0008270">
    <property type="term" value="F:zinc ion binding"/>
    <property type="evidence" value="ECO:0007669"/>
    <property type="project" value="UniProtKB-UniRule"/>
</dbReference>
<dbReference type="GO" id="GO:0006428">
    <property type="term" value="P:isoleucyl-tRNA aminoacylation"/>
    <property type="evidence" value="ECO:0007669"/>
    <property type="project" value="UniProtKB-UniRule"/>
</dbReference>
<dbReference type="CDD" id="cd07960">
    <property type="entry name" value="Anticodon_Ia_Ile_BEm"/>
    <property type="match status" value="1"/>
</dbReference>
<dbReference type="CDD" id="cd00818">
    <property type="entry name" value="IleRS_core"/>
    <property type="match status" value="1"/>
</dbReference>
<dbReference type="FunFam" id="1.10.730.20:FF:000001">
    <property type="entry name" value="Isoleucine--tRNA ligase"/>
    <property type="match status" value="1"/>
</dbReference>
<dbReference type="FunFam" id="3.40.50.620:FF:000042">
    <property type="entry name" value="Isoleucine--tRNA ligase"/>
    <property type="match status" value="1"/>
</dbReference>
<dbReference type="FunFam" id="3.40.50.620:FF:000048">
    <property type="entry name" value="Isoleucine--tRNA ligase"/>
    <property type="match status" value="1"/>
</dbReference>
<dbReference type="Gene3D" id="1.10.730.20">
    <property type="match status" value="1"/>
</dbReference>
<dbReference type="Gene3D" id="3.40.50.620">
    <property type="entry name" value="HUPs"/>
    <property type="match status" value="2"/>
</dbReference>
<dbReference type="Gene3D" id="3.90.740.10">
    <property type="entry name" value="Valyl/Leucyl/Isoleucyl-tRNA synthetase, editing domain"/>
    <property type="match status" value="1"/>
</dbReference>
<dbReference type="HAMAP" id="MF_02002">
    <property type="entry name" value="Ile_tRNA_synth_type1"/>
    <property type="match status" value="1"/>
</dbReference>
<dbReference type="InterPro" id="IPR001412">
    <property type="entry name" value="aa-tRNA-synth_I_CS"/>
</dbReference>
<dbReference type="InterPro" id="IPR002300">
    <property type="entry name" value="aa-tRNA-synth_Ia"/>
</dbReference>
<dbReference type="InterPro" id="IPR033708">
    <property type="entry name" value="Anticodon_Ile_BEm"/>
</dbReference>
<dbReference type="InterPro" id="IPR002301">
    <property type="entry name" value="Ile-tRNA-ligase"/>
</dbReference>
<dbReference type="InterPro" id="IPR023585">
    <property type="entry name" value="Ile-tRNA-ligase_type1"/>
</dbReference>
<dbReference type="InterPro" id="IPR050081">
    <property type="entry name" value="Ile-tRNA_ligase"/>
</dbReference>
<dbReference type="InterPro" id="IPR013155">
    <property type="entry name" value="M/V/L/I-tRNA-synth_anticd-bd"/>
</dbReference>
<dbReference type="InterPro" id="IPR014729">
    <property type="entry name" value="Rossmann-like_a/b/a_fold"/>
</dbReference>
<dbReference type="InterPro" id="IPR009080">
    <property type="entry name" value="tRNAsynth_Ia_anticodon-bd"/>
</dbReference>
<dbReference type="InterPro" id="IPR009008">
    <property type="entry name" value="Val/Leu/Ile-tRNA-synth_edit"/>
</dbReference>
<dbReference type="InterPro" id="IPR010663">
    <property type="entry name" value="Znf_FPG/IleRS"/>
</dbReference>
<dbReference type="NCBIfam" id="TIGR00392">
    <property type="entry name" value="ileS"/>
    <property type="match status" value="1"/>
</dbReference>
<dbReference type="PANTHER" id="PTHR42765:SF1">
    <property type="entry name" value="ISOLEUCINE--TRNA LIGASE, MITOCHONDRIAL"/>
    <property type="match status" value="1"/>
</dbReference>
<dbReference type="PANTHER" id="PTHR42765">
    <property type="entry name" value="SOLEUCYL-TRNA SYNTHETASE"/>
    <property type="match status" value="1"/>
</dbReference>
<dbReference type="Pfam" id="PF08264">
    <property type="entry name" value="Anticodon_1"/>
    <property type="match status" value="1"/>
</dbReference>
<dbReference type="Pfam" id="PF00133">
    <property type="entry name" value="tRNA-synt_1"/>
    <property type="match status" value="1"/>
</dbReference>
<dbReference type="Pfam" id="PF06827">
    <property type="entry name" value="zf-FPG_IleRS"/>
    <property type="match status" value="1"/>
</dbReference>
<dbReference type="PRINTS" id="PR00984">
    <property type="entry name" value="TRNASYNTHILE"/>
</dbReference>
<dbReference type="SUPFAM" id="SSF47323">
    <property type="entry name" value="Anticodon-binding domain of a subclass of class I aminoacyl-tRNA synthetases"/>
    <property type="match status" value="1"/>
</dbReference>
<dbReference type="SUPFAM" id="SSF52374">
    <property type="entry name" value="Nucleotidylyl transferase"/>
    <property type="match status" value="1"/>
</dbReference>
<dbReference type="SUPFAM" id="SSF50677">
    <property type="entry name" value="ValRS/IleRS/LeuRS editing domain"/>
    <property type="match status" value="1"/>
</dbReference>
<dbReference type="PROSITE" id="PS00178">
    <property type="entry name" value="AA_TRNA_LIGASE_I"/>
    <property type="match status" value="1"/>
</dbReference>
<accession>Q21HK3</accession>
<feature type="chain" id="PRO_1000022114" description="Isoleucine--tRNA ligase">
    <location>
        <begin position="1"/>
        <end position="932"/>
    </location>
</feature>
<feature type="short sequence motif" description="'HIGH' region">
    <location>
        <begin position="58"/>
        <end position="68"/>
    </location>
</feature>
<feature type="short sequence motif" description="'KMSKS' region">
    <location>
        <begin position="600"/>
        <end position="604"/>
    </location>
</feature>
<feature type="binding site" evidence="1">
    <location>
        <position position="559"/>
    </location>
    <ligand>
        <name>L-isoleucyl-5'-AMP</name>
        <dbReference type="ChEBI" id="CHEBI:178002"/>
    </ligand>
</feature>
<feature type="binding site" evidence="1">
    <location>
        <position position="603"/>
    </location>
    <ligand>
        <name>ATP</name>
        <dbReference type="ChEBI" id="CHEBI:30616"/>
    </ligand>
</feature>
<feature type="binding site" evidence="1">
    <location>
        <position position="895"/>
    </location>
    <ligand>
        <name>Zn(2+)</name>
        <dbReference type="ChEBI" id="CHEBI:29105"/>
    </ligand>
</feature>
<feature type="binding site" evidence="1">
    <location>
        <position position="898"/>
    </location>
    <ligand>
        <name>Zn(2+)</name>
        <dbReference type="ChEBI" id="CHEBI:29105"/>
    </ligand>
</feature>
<feature type="binding site" evidence="1">
    <location>
        <position position="915"/>
    </location>
    <ligand>
        <name>Zn(2+)</name>
        <dbReference type="ChEBI" id="CHEBI:29105"/>
    </ligand>
</feature>
<feature type="binding site" evidence="1">
    <location>
        <position position="918"/>
    </location>
    <ligand>
        <name>Zn(2+)</name>
        <dbReference type="ChEBI" id="CHEBI:29105"/>
    </ligand>
</feature>
<proteinExistence type="inferred from homology"/>
<evidence type="ECO:0000255" key="1">
    <source>
        <dbReference type="HAMAP-Rule" id="MF_02002"/>
    </source>
</evidence>
<name>SYI_SACD2</name>
<organism>
    <name type="scientific">Saccharophagus degradans (strain 2-40 / ATCC 43961 / DSM 17024)</name>
    <dbReference type="NCBI Taxonomy" id="203122"/>
    <lineage>
        <taxon>Bacteria</taxon>
        <taxon>Pseudomonadati</taxon>
        <taxon>Pseudomonadota</taxon>
        <taxon>Gammaproteobacteria</taxon>
        <taxon>Cellvibrionales</taxon>
        <taxon>Cellvibrionaceae</taxon>
        <taxon>Saccharophagus</taxon>
    </lineage>
</organism>
<gene>
    <name evidence="1" type="primary">ileS</name>
    <name type="ordered locus">Sde_2566</name>
</gene>
<reference key="1">
    <citation type="journal article" date="2008" name="PLoS Genet.">
        <title>Complete genome sequence of the complex carbohydrate-degrading marine bacterium, Saccharophagus degradans strain 2-40 T.</title>
        <authorList>
            <person name="Weiner R.M."/>
            <person name="Taylor L.E. II"/>
            <person name="Henrissat B."/>
            <person name="Hauser L."/>
            <person name="Land M."/>
            <person name="Coutinho P.M."/>
            <person name="Rancurel C."/>
            <person name="Saunders E.H."/>
            <person name="Longmire A.G."/>
            <person name="Zhang H."/>
            <person name="Bayer E.A."/>
            <person name="Gilbert H.J."/>
            <person name="Larimer F."/>
            <person name="Zhulin I.B."/>
            <person name="Ekborg N.A."/>
            <person name="Lamed R."/>
            <person name="Richardson P.M."/>
            <person name="Borovok I."/>
            <person name="Hutcheson S."/>
        </authorList>
    </citation>
    <scope>NUCLEOTIDE SEQUENCE [LARGE SCALE GENOMIC DNA]</scope>
    <source>
        <strain>2-40 / ATCC 43961 / DSM 17024</strain>
    </source>
</reference>
<keyword id="KW-0030">Aminoacyl-tRNA synthetase</keyword>
<keyword id="KW-0067">ATP-binding</keyword>
<keyword id="KW-0963">Cytoplasm</keyword>
<keyword id="KW-0436">Ligase</keyword>
<keyword id="KW-0479">Metal-binding</keyword>
<keyword id="KW-0547">Nucleotide-binding</keyword>
<keyword id="KW-0648">Protein biosynthesis</keyword>
<keyword id="KW-1185">Reference proteome</keyword>
<keyword id="KW-0862">Zinc</keyword>
<comment type="function">
    <text evidence="1">Catalyzes the attachment of isoleucine to tRNA(Ile). As IleRS can inadvertently accommodate and process structurally similar amino acids such as valine, to avoid such errors it has two additional distinct tRNA(Ile)-dependent editing activities. One activity is designated as 'pretransfer' editing and involves the hydrolysis of activated Val-AMP. The other activity is designated 'posttransfer' editing and involves deacylation of mischarged Val-tRNA(Ile).</text>
</comment>
<comment type="catalytic activity">
    <reaction evidence="1">
        <text>tRNA(Ile) + L-isoleucine + ATP = L-isoleucyl-tRNA(Ile) + AMP + diphosphate</text>
        <dbReference type="Rhea" id="RHEA:11060"/>
        <dbReference type="Rhea" id="RHEA-COMP:9666"/>
        <dbReference type="Rhea" id="RHEA-COMP:9695"/>
        <dbReference type="ChEBI" id="CHEBI:30616"/>
        <dbReference type="ChEBI" id="CHEBI:33019"/>
        <dbReference type="ChEBI" id="CHEBI:58045"/>
        <dbReference type="ChEBI" id="CHEBI:78442"/>
        <dbReference type="ChEBI" id="CHEBI:78528"/>
        <dbReference type="ChEBI" id="CHEBI:456215"/>
        <dbReference type="EC" id="6.1.1.5"/>
    </reaction>
</comment>
<comment type="cofactor">
    <cofactor evidence="1">
        <name>Zn(2+)</name>
        <dbReference type="ChEBI" id="CHEBI:29105"/>
    </cofactor>
    <text evidence="1">Binds 1 zinc ion per subunit.</text>
</comment>
<comment type="subunit">
    <text evidence="1">Monomer.</text>
</comment>
<comment type="subcellular location">
    <subcellularLocation>
        <location evidence="1">Cytoplasm</location>
    </subcellularLocation>
</comment>
<comment type="domain">
    <text evidence="1">IleRS has two distinct active sites: one for aminoacylation and one for editing. The misactivated valine is translocated from the active site to the editing site, which sterically excludes the correctly activated isoleucine. The single editing site contains two valyl binding pockets, one specific for each substrate (Val-AMP or Val-tRNA(Ile)).</text>
</comment>
<comment type="similarity">
    <text evidence="1">Belongs to the class-I aminoacyl-tRNA synthetase family. IleS type 1 subfamily.</text>
</comment>
<sequence>MTDYKATLNLPQTSFAMKANLAQREPGMLKQWQQSKLYEQIREARKGREQFILHDGPPYANGDIHIGHAVNKILKDIIIKAKTLSGFDAPYVPGWDCHGLPIEHNVEKKVGKAGVKIDHVAFRQKCRDYARKQVEGQKKDFIRLGVLGEWDTPYLTMDFKTEADTVRALGKIVENGHLHKGFKPVYWSVVGASALAEAEVEYQDKTSFAIDVCFGVADVEDFAARVGSVAGTGNISVVIWTTTPWTLPANQAVSVNGELDYVVVQHGEQRLVLAEALVESVAKRLGVEELATVATFKGAAIEGLKLNHPFYAKQVPVLLGDHVTTDAGTGCVHTAPDHGADDFVVSNKYGIETLNYVDENGIYRDNVEIFAGDHVYKVDEKVIGLLEENGRLLHQAKLVHSFPHCWRTKTPLIFRATPQWFVSMTKNNLLKDVKQAVEGVNWVPDWGRARIDSMLDSSPDWCISRQRTWGVPITLFVHKETQELHPNTAALVEDVAKRIEEKGMDAWFELDAVELLGDEADQYQKVTDTLDVWFDSGVTHYSVVNARENLRYPADLYLEGSDQHRGWFQSSLKTSMAINGSAPYKQVLTHGFTVDADGKKMSKSIGNTVSPQKVMNDLGADVLRLWVAATDFSGDMSVSDEILKRTADSYRRIRNTARFFLSNLTGFNPQTDLLPAEEMLSLDRWAVDRAAALQADILKSYDTYQLHQIYQKLHNFCVVEMGGFYLDIIKDRQYTTKETSHARRSAQSALYHIVEAFVRWIAPICSFTADEIWQAMPGEKTGTVFTAEWYNLPRLAEGAELGNSYWQFIAKVKTAVNKTIEAKRSAGEVGGSLAAEVTLYCSESVAQKLTLLKDELRFVLICSSVTVVAASETEGEATEVEGLRVAVAKSSHEKCARCWHHREDVGQNTAHPEICGRCVENIDGEGESREFA</sequence>
<protein>
    <recommendedName>
        <fullName evidence="1">Isoleucine--tRNA ligase</fullName>
        <ecNumber evidence="1">6.1.1.5</ecNumber>
    </recommendedName>
    <alternativeName>
        <fullName evidence="1">Isoleucyl-tRNA synthetase</fullName>
        <shortName evidence="1">IleRS</shortName>
    </alternativeName>
</protein>